<organism>
    <name type="scientific">Escherichia coli O127:H6 (strain E2348/69 / EPEC)</name>
    <dbReference type="NCBI Taxonomy" id="574521"/>
    <lineage>
        <taxon>Bacteria</taxon>
        <taxon>Pseudomonadati</taxon>
        <taxon>Pseudomonadota</taxon>
        <taxon>Gammaproteobacteria</taxon>
        <taxon>Enterobacterales</taxon>
        <taxon>Enterobacteriaceae</taxon>
        <taxon>Escherichia</taxon>
    </lineage>
</organism>
<name>NANT_ECO27</name>
<accession>B7UJV7</accession>
<proteinExistence type="inferred from homology"/>
<reference key="1">
    <citation type="journal article" date="2009" name="J. Bacteriol.">
        <title>Complete genome sequence and comparative genome analysis of enteropathogenic Escherichia coli O127:H6 strain E2348/69.</title>
        <authorList>
            <person name="Iguchi A."/>
            <person name="Thomson N.R."/>
            <person name="Ogura Y."/>
            <person name="Saunders D."/>
            <person name="Ooka T."/>
            <person name="Henderson I.R."/>
            <person name="Harris D."/>
            <person name="Asadulghani M."/>
            <person name="Kurokawa K."/>
            <person name="Dean P."/>
            <person name="Kenny B."/>
            <person name="Quail M.A."/>
            <person name="Thurston S."/>
            <person name="Dougan G."/>
            <person name="Hayashi T."/>
            <person name="Parkhill J."/>
            <person name="Frankel G."/>
        </authorList>
    </citation>
    <scope>NUCLEOTIDE SEQUENCE [LARGE SCALE GENOMIC DNA]</scope>
    <source>
        <strain>E2348/69 / EPEC</strain>
    </source>
</reference>
<sequence length="496" mass="53568">MSTTTQNIPWYRHLNRAQWRAFSAAWLGYLLDGFDFVLIALVLTEVQGEFGLTTVQAASLISAAFISRWFGGLMLGAMGDRYGRRLAMVTSIVLFSAGTLACGFAPGYITMFIARLVIGMGMAGEYGSSATYVIESWPKHLRNKASGFLISGFSVGAVVAAQVYSLVVPVWGWRALFFIGILPIIFALWLRKNIPEAEDWKEKHGGKAPVRTMVDILYRGEHRIANIVMTLAAATALWFCFAGNLQNAAIVAVLGLLCAAIFISFMVQSTGKRWPTGVMLMVVVLFAFLYSWPIQALLPTYLKTDLAYDPHTVANVLFFSGFGAAVGCCVGGFLGDWLGTRKAYVCSLLASQLLIIPVFAIGGANVWVLGLLLFFQQMLGQGIAGILPKLIGGYFDTDQRAAGLGFTYNVGALGGALAPIIGALIAQRLDLGTALASLSFSLTFVVILLIGLDMPSRVQRWLRPEALRTHDAIDGKPFSGAVPFGSAKNDLVKTKS</sequence>
<comment type="function">
    <text evidence="1">Catalyzes the proton-dependent transport of sialic acid.</text>
</comment>
<comment type="catalytic activity">
    <reaction evidence="1">
        <text>N-acetylneuraminate(in) + H(+)(in) = N-acetylneuraminate(out) + H(+)(out)</text>
        <dbReference type="Rhea" id="RHEA:28987"/>
        <dbReference type="ChEBI" id="CHEBI:15378"/>
        <dbReference type="ChEBI" id="CHEBI:35418"/>
    </reaction>
</comment>
<comment type="subcellular location">
    <subcellularLocation>
        <location evidence="1">Cell inner membrane</location>
        <topology evidence="1">Multi-pass membrane protein</topology>
    </subcellularLocation>
</comment>
<comment type="similarity">
    <text evidence="1">Belongs to the major facilitator superfamily. Sialate:H(+) symporter (SHS) (TC 2.A.1.12) family.</text>
</comment>
<evidence type="ECO:0000255" key="1">
    <source>
        <dbReference type="HAMAP-Rule" id="MF_01238"/>
    </source>
</evidence>
<protein>
    <recommendedName>
        <fullName evidence="1">Sialic acid transporter NanT</fullName>
    </recommendedName>
    <alternativeName>
        <fullName evidence="1">Sialic acid permease</fullName>
    </alternativeName>
    <alternativeName>
        <fullName evidence="1">Sialic acid/H(+) symporter</fullName>
    </alternativeName>
</protein>
<keyword id="KW-0997">Cell inner membrane</keyword>
<keyword id="KW-1003">Cell membrane</keyword>
<keyword id="KW-0472">Membrane</keyword>
<keyword id="KW-1185">Reference proteome</keyword>
<keyword id="KW-0762">Sugar transport</keyword>
<keyword id="KW-0812">Transmembrane</keyword>
<keyword id="KW-1133">Transmembrane helix</keyword>
<keyword id="KW-0813">Transport</keyword>
<gene>
    <name evidence="1" type="primary">nanT</name>
    <name type="ordered locus">E2348C_3496</name>
</gene>
<feature type="chain" id="PRO_1000214040" description="Sialic acid transporter NanT">
    <location>
        <begin position="1"/>
        <end position="496"/>
    </location>
</feature>
<feature type="transmembrane region" description="Helical" evidence="1">
    <location>
        <begin position="22"/>
        <end position="42"/>
    </location>
</feature>
<feature type="transmembrane region" description="Helical" evidence="1">
    <location>
        <begin position="58"/>
        <end position="78"/>
    </location>
</feature>
<feature type="transmembrane region" description="Helical" evidence="1">
    <location>
        <begin position="92"/>
        <end position="112"/>
    </location>
</feature>
<feature type="transmembrane region" description="Helical" evidence="1">
    <location>
        <begin position="116"/>
        <end position="136"/>
    </location>
</feature>
<feature type="transmembrane region" description="Helical" evidence="1">
    <location>
        <begin position="148"/>
        <end position="168"/>
    </location>
</feature>
<feature type="transmembrane region" description="Helical" evidence="1">
    <location>
        <begin position="170"/>
        <end position="190"/>
    </location>
</feature>
<feature type="transmembrane region" description="Helical" evidence="1">
    <location>
        <begin position="224"/>
        <end position="244"/>
    </location>
</feature>
<feature type="transmembrane region" description="Helical" evidence="1">
    <location>
        <begin position="247"/>
        <end position="267"/>
    </location>
</feature>
<feature type="transmembrane region" description="Helical" evidence="1">
    <location>
        <begin position="278"/>
        <end position="298"/>
    </location>
</feature>
<feature type="transmembrane region" description="Helical" evidence="1">
    <location>
        <begin position="313"/>
        <end position="333"/>
    </location>
</feature>
<feature type="transmembrane region" description="Helical" evidence="1">
    <location>
        <begin position="353"/>
        <end position="375"/>
    </location>
</feature>
<feature type="transmembrane region" description="Helical" evidence="1">
    <location>
        <begin position="406"/>
        <end position="426"/>
    </location>
</feature>
<feature type="transmembrane region" description="Helical" evidence="1">
    <location>
        <begin position="431"/>
        <end position="451"/>
    </location>
</feature>
<dbReference type="EMBL" id="FM180568">
    <property type="protein sequence ID" value="CAS11044.1"/>
    <property type="molecule type" value="Genomic_DNA"/>
</dbReference>
<dbReference type="RefSeq" id="WP_000108473.1">
    <property type="nucleotide sequence ID" value="NC_011601.1"/>
</dbReference>
<dbReference type="SMR" id="B7UJV7"/>
<dbReference type="KEGG" id="ecg:E2348C_3496"/>
<dbReference type="HOGENOM" id="CLU_001265_46_8_6"/>
<dbReference type="Proteomes" id="UP000008205">
    <property type="component" value="Chromosome"/>
</dbReference>
<dbReference type="GO" id="GO:0005886">
    <property type="term" value="C:plasma membrane"/>
    <property type="evidence" value="ECO:0007669"/>
    <property type="project" value="UniProtKB-SubCell"/>
</dbReference>
<dbReference type="GO" id="GO:0046943">
    <property type="term" value="F:carboxylic acid transmembrane transporter activity"/>
    <property type="evidence" value="ECO:0007669"/>
    <property type="project" value="TreeGrafter"/>
</dbReference>
<dbReference type="GO" id="GO:0015538">
    <property type="term" value="F:sialic acid:proton symporter activity"/>
    <property type="evidence" value="ECO:0007669"/>
    <property type="project" value="UniProtKB-UniRule"/>
</dbReference>
<dbReference type="CDD" id="cd17316">
    <property type="entry name" value="MFS_SV2_like"/>
    <property type="match status" value="1"/>
</dbReference>
<dbReference type="FunFam" id="1.20.1250.20:FF:000027">
    <property type="entry name" value="Sialic acid transporter NanT"/>
    <property type="match status" value="1"/>
</dbReference>
<dbReference type="FunFam" id="1.20.1250.20:FF:000038">
    <property type="entry name" value="Sialic acid transporter NanT"/>
    <property type="match status" value="1"/>
</dbReference>
<dbReference type="Gene3D" id="1.20.1250.20">
    <property type="entry name" value="MFS general substrate transporter like domains"/>
    <property type="match status" value="2"/>
</dbReference>
<dbReference type="HAMAP" id="MF_01238">
    <property type="entry name" value="MFS_NanT"/>
    <property type="match status" value="1"/>
</dbReference>
<dbReference type="InterPro" id="IPR011701">
    <property type="entry name" value="MFS"/>
</dbReference>
<dbReference type="InterPro" id="IPR020846">
    <property type="entry name" value="MFS_dom"/>
</dbReference>
<dbReference type="InterPro" id="IPR036259">
    <property type="entry name" value="MFS_trans_sf"/>
</dbReference>
<dbReference type="InterPro" id="IPR004742">
    <property type="entry name" value="SA_transporter"/>
</dbReference>
<dbReference type="NCBIfam" id="TIGR00891">
    <property type="entry name" value="2A0112"/>
    <property type="match status" value="1"/>
</dbReference>
<dbReference type="NCBIfam" id="NF003024">
    <property type="entry name" value="PRK03893.1"/>
    <property type="match status" value="1"/>
</dbReference>
<dbReference type="PANTHER" id="PTHR23508">
    <property type="entry name" value="CARBOXYLIC ACID TRANSPORTER PROTEIN HOMOLOG"/>
    <property type="match status" value="1"/>
</dbReference>
<dbReference type="PANTHER" id="PTHR23508:SF3">
    <property type="entry name" value="SIALIC ACID TRANSPORTER NANT"/>
    <property type="match status" value="1"/>
</dbReference>
<dbReference type="Pfam" id="PF07690">
    <property type="entry name" value="MFS_1"/>
    <property type="match status" value="1"/>
</dbReference>
<dbReference type="SUPFAM" id="SSF103473">
    <property type="entry name" value="MFS general substrate transporter"/>
    <property type="match status" value="1"/>
</dbReference>
<dbReference type="PROSITE" id="PS50850">
    <property type="entry name" value="MFS"/>
    <property type="match status" value="1"/>
</dbReference>